<protein>
    <recommendedName>
        <fullName evidence="1">ATP-dependent Clp protease ATP-binding subunit ClpX</fullName>
    </recommendedName>
</protein>
<reference key="1">
    <citation type="submission" date="2009-01" db="EMBL/GenBank/DDBJ databases">
        <title>Complete sequence of chromosome of Arthrobacter chlorophenolicus A6.</title>
        <authorList>
            <consortium name="US DOE Joint Genome Institute"/>
            <person name="Lucas S."/>
            <person name="Copeland A."/>
            <person name="Lapidus A."/>
            <person name="Glavina del Rio T."/>
            <person name="Tice H."/>
            <person name="Bruce D."/>
            <person name="Goodwin L."/>
            <person name="Pitluck S."/>
            <person name="Goltsman E."/>
            <person name="Clum A."/>
            <person name="Larimer F."/>
            <person name="Land M."/>
            <person name="Hauser L."/>
            <person name="Kyrpides N."/>
            <person name="Mikhailova N."/>
            <person name="Jansson J."/>
            <person name="Richardson P."/>
        </authorList>
    </citation>
    <scope>NUCLEOTIDE SEQUENCE [LARGE SCALE GENOMIC DNA]</scope>
    <source>
        <strain>ATCC 700700 / DSM 12829 / CIP 107037 / JCM 12360 / KCTC 9906 / NCIMB 13794 / A6</strain>
    </source>
</reference>
<proteinExistence type="inferred from homology"/>
<feature type="chain" id="PRO_1000123818" description="ATP-dependent Clp protease ATP-binding subunit ClpX">
    <location>
        <begin position="1"/>
        <end position="426"/>
    </location>
</feature>
<feature type="domain" description="ClpX-type ZB" evidence="2">
    <location>
        <begin position="1"/>
        <end position="54"/>
    </location>
</feature>
<feature type="binding site" evidence="2">
    <location>
        <position position="13"/>
    </location>
    <ligand>
        <name>Zn(2+)</name>
        <dbReference type="ChEBI" id="CHEBI:29105"/>
    </ligand>
</feature>
<feature type="binding site" evidence="2">
    <location>
        <position position="16"/>
    </location>
    <ligand>
        <name>Zn(2+)</name>
        <dbReference type="ChEBI" id="CHEBI:29105"/>
    </ligand>
</feature>
<feature type="binding site" evidence="2">
    <location>
        <position position="35"/>
    </location>
    <ligand>
        <name>Zn(2+)</name>
        <dbReference type="ChEBI" id="CHEBI:29105"/>
    </ligand>
</feature>
<feature type="binding site" evidence="2">
    <location>
        <position position="38"/>
    </location>
    <ligand>
        <name>Zn(2+)</name>
        <dbReference type="ChEBI" id="CHEBI:29105"/>
    </ligand>
</feature>
<feature type="binding site" evidence="1">
    <location>
        <begin position="128"/>
        <end position="135"/>
    </location>
    <ligand>
        <name>ATP</name>
        <dbReference type="ChEBI" id="CHEBI:30616"/>
    </ligand>
</feature>
<organism>
    <name type="scientific">Pseudarthrobacter chlorophenolicus (strain ATCC 700700 / DSM 12829 / CIP 107037 / JCM 12360 / KCTC 9906 / NCIMB 13794 / A6)</name>
    <name type="common">Arthrobacter chlorophenolicus</name>
    <dbReference type="NCBI Taxonomy" id="452863"/>
    <lineage>
        <taxon>Bacteria</taxon>
        <taxon>Bacillati</taxon>
        <taxon>Actinomycetota</taxon>
        <taxon>Actinomycetes</taxon>
        <taxon>Micrococcales</taxon>
        <taxon>Micrococcaceae</taxon>
        <taxon>Pseudarthrobacter</taxon>
    </lineage>
</organism>
<dbReference type="EMBL" id="CP001341">
    <property type="protein sequence ID" value="ACL40125.1"/>
    <property type="molecule type" value="Genomic_DNA"/>
</dbReference>
<dbReference type="RefSeq" id="WP_015937342.1">
    <property type="nucleotide sequence ID" value="NC_011886.1"/>
</dbReference>
<dbReference type="SMR" id="B8HA33"/>
<dbReference type="STRING" id="452863.Achl_2157"/>
<dbReference type="KEGG" id="ach:Achl_2157"/>
<dbReference type="eggNOG" id="COG1219">
    <property type="taxonomic scope" value="Bacteria"/>
</dbReference>
<dbReference type="HOGENOM" id="CLU_014218_8_2_11"/>
<dbReference type="OrthoDB" id="9804062at2"/>
<dbReference type="Proteomes" id="UP000002505">
    <property type="component" value="Chromosome"/>
</dbReference>
<dbReference type="GO" id="GO:0009376">
    <property type="term" value="C:HslUV protease complex"/>
    <property type="evidence" value="ECO:0007669"/>
    <property type="project" value="TreeGrafter"/>
</dbReference>
<dbReference type="GO" id="GO:0005524">
    <property type="term" value="F:ATP binding"/>
    <property type="evidence" value="ECO:0007669"/>
    <property type="project" value="UniProtKB-UniRule"/>
</dbReference>
<dbReference type="GO" id="GO:0016887">
    <property type="term" value="F:ATP hydrolysis activity"/>
    <property type="evidence" value="ECO:0007669"/>
    <property type="project" value="InterPro"/>
</dbReference>
<dbReference type="GO" id="GO:0140662">
    <property type="term" value="F:ATP-dependent protein folding chaperone"/>
    <property type="evidence" value="ECO:0007669"/>
    <property type="project" value="InterPro"/>
</dbReference>
<dbReference type="GO" id="GO:0046983">
    <property type="term" value="F:protein dimerization activity"/>
    <property type="evidence" value="ECO:0007669"/>
    <property type="project" value="InterPro"/>
</dbReference>
<dbReference type="GO" id="GO:0051082">
    <property type="term" value="F:unfolded protein binding"/>
    <property type="evidence" value="ECO:0007669"/>
    <property type="project" value="UniProtKB-UniRule"/>
</dbReference>
<dbReference type="GO" id="GO:0008270">
    <property type="term" value="F:zinc ion binding"/>
    <property type="evidence" value="ECO:0007669"/>
    <property type="project" value="InterPro"/>
</dbReference>
<dbReference type="GO" id="GO:0051301">
    <property type="term" value="P:cell division"/>
    <property type="evidence" value="ECO:0007669"/>
    <property type="project" value="TreeGrafter"/>
</dbReference>
<dbReference type="GO" id="GO:0051603">
    <property type="term" value="P:proteolysis involved in protein catabolic process"/>
    <property type="evidence" value="ECO:0007669"/>
    <property type="project" value="TreeGrafter"/>
</dbReference>
<dbReference type="CDD" id="cd19497">
    <property type="entry name" value="RecA-like_ClpX"/>
    <property type="match status" value="1"/>
</dbReference>
<dbReference type="FunFam" id="1.10.8.60:FF:000002">
    <property type="entry name" value="ATP-dependent Clp protease ATP-binding subunit ClpX"/>
    <property type="match status" value="1"/>
</dbReference>
<dbReference type="FunFam" id="3.40.50.300:FF:000005">
    <property type="entry name" value="ATP-dependent Clp protease ATP-binding subunit ClpX"/>
    <property type="match status" value="1"/>
</dbReference>
<dbReference type="Gene3D" id="1.10.8.60">
    <property type="match status" value="1"/>
</dbReference>
<dbReference type="Gene3D" id="6.20.220.10">
    <property type="entry name" value="ClpX chaperone, C4-type zinc finger domain"/>
    <property type="match status" value="1"/>
</dbReference>
<dbReference type="Gene3D" id="3.40.50.300">
    <property type="entry name" value="P-loop containing nucleotide triphosphate hydrolases"/>
    <property type="match status" value="1"/>
</dbReference>
<dbReference type="HAMAP" id="MF_00175">
    <property type="entry name" value="ClpX"/>
    <property type="match status" value="1"/>
</dbReference>
<dbReference type="InterPro" id="IPR003593">
    <property type="entry name" value="AAA+_ATPase"/>
</dbReference>
<dbReference type="InterPro" id="IPR050052">
    <property type="entry name" value="ATP-dep_Clp_protease_ClpX"/>
</dbReference>
<dbReference type="InterPro" id="IPR003959">
    <property type="entry name" value="ATPase_AAA_core"/>
</dbReference>
<dbReference type="InterPro" id="IPR019489">
    <property type="entry name" value="Clp_ATPase_C"/>
</dbReference>
<dbReference type="InterPro" id="IPR004487">
    <property type="entry name" value="Clp_protease_ATP-bd_su_ClpX"/>
</dbReference>
<dbReference type="InterPro" id="IPR046425">
    <property type="entry name" value="ClpX_bact"/>
</dbReference>
<dbReference type="InterPro" id="IPR027417">
    <property type="entry name" value="P-loop_NTPase"/>
</dbReference>
<dbReference type="InterPro" id="IPR010603">
    <property type="entry name" value="Znf_CppX_C4"/>
</dbReference>
<dbReference type="InterPro" id="IPR038366">
    <property type="entry name" value="Znf_CppX_C4_sf"/>
</dbReference>
<dbReference type="NCBIfam" id="TIGR00382">
    <property type="entry name" value="clpX"/>
    <property type="match status" value="1"/>
</dbReference>
<dbReference type="NCBIfam" id="NF003745">
    <property type="entry name" value="PRK05342.1"/>
    <property type="match status" value="1"/>
</dbReference>
<dbReference type="PANTHER" id="PTHR48102:SF7">
    <property type="entry name" value="ATP-DEPENDENT CLP PROTEASE ATP-BINDING SUBUNIT CLPX-LIKE, MITOCHONDRIAL"/>
    <property type="match status" value="1"/>
</dbReference>
<dbReference type="PANTHER" id="PTHR48102">
    <property type="entry name" value="ATP-DEPENDENT CLP PROTEASE ATP-BINDING SUBUNIT CLPX-LIKE, MITOCHONDRIAL-RELATED"/>
    <property type="match status" value="1"/>
</dbReference>
<dbReference type="Pfam" id="PF07724">
    <property type="entry name" value="AAA_2"/>
    <property type="match status" value="1"/>
</dbReference>
<dbReference type="Pfam" id="PF10431">
    <property type="entry name" value="ClpB_D2-small"/>
    <property type="match status" value="1"/>
</dbReference>
<dbReference type="Pfam" id="PF06689">
    <property type="entry name" value="zf-C4_ClpX"/>
    <property type="match status" value="1"/>
</dbReference>
<dbReference type="SMART" id="SM00382">
    <property type="entry name" value="AAA"/>
    <property type="match status" value="1"/>
</dbReference>
<dbReference type="SMART" id="SM01086">
    <property type="entry name" value="ClpB_D2-small"/>
    <property type="match status" value="1"/>
</dbReference>
<dbReference type="SMART" id="SM00994">
    <property type="entry name" value="zf-C4_ClpX"/>
    <property type="match status" value="1"/>
</dbReference>
<dbReference type="SUPFAM" id="SSF57716">
    <property type="entry name" value="Glucocorticoid receptor-like (DNA-binding domain)"/>
    <property type="match status" value="1"/>
</dbReference>
<dbReference type="SUPFAM" id="SSF52540">
    <property type="entry name" value="P-loop containing nucleoside triphosphate hydrolases"/>
    <property type="match status" value="1"/>
</dbReference>
<dbReference type="PROSITE" id="PS51902">
    <property type="entry name" value="CLPX_ZB"/>
    <property type="match status" value="1"/>
</dbReference>
<gene>
    <name evidence="1" type="primary">clpX</name>
    <name type="ordered locus">Achl_2157</name>
</gene>
<comment type="function">
    <text evidence="1">ATP-dependent specificity component of the Clp protease. It directs the protease to specific substrates. Can perform chaperone functions in the absence of ClpP.</text>
</comment>
<comment type="subunit">
    <text evidence="1">Component of the ClpX-ClpP complex. Forms a hexameric ring that, in the presence of ATP, binds to fourteen ClpP subunits assembled into a disk-like structure with a central cavity, resembling the structure of eukaryotic proteasomes.</text>
</comment>
<comment type="similarity">
    <text evidence="1">Belongs to the ClpX chaperone family.</text>
</comment>
<keyword id="KW-0067">ATP-binding</keyword>
<keyword id="KW-0143">Chaperone</keyword>
<keyword id="KW-0479">Metal-binding</keyword>
<keyword id="KW-0547">Nucleotide-binding</keyword>
<keyword id="KW-0862">Zinc</keyword>
<evidence type="ECO:0000255" key="1">
    <source>
        <dbReference type="HAMAP-Rule" id="MF_00175"/>
    </source>
</evidence>
<evidence type="ECO:0000255" key="2">
    <source>
        <dbReference type="PROSITE-ProRule" id="PRU01250"/>
    </source>
</evidence>
<name>CLPX_PSECP</name>
<sequence length="426" mass="46287">MARIGESTDLLKCSFCGKSQKQVRKLIAGPGVYICDECIELCNEIIEEELAEVADLGSFELPKPREIFDFLQEYVIGQEPAKRSLAVAVYNHYKRIQAGHAPKSGNLGDGGHHDDVEIAKSNILLIGPTGCGKTYLAQTLARRLNVPFAVADATALTEAGYVGEDVENILLKLIQAADYDVKKAEQGIIYIDEIDKISRKSENPSITRDVSGEGVQQALLKILEGTVASVPPQGGRKHPHQEFIQIDTTNVLFIVAGAFAGLEEIIGSRSGRKGIGFGAPLNEASKKADSYGEVMPEDLLKFGLIPEFIGRLPVITTVSNLDRDALIQILSTPKNALVKQYQKMFQIDGVELVFDDGALDAIADQALERGTGARGLRAILEEVLLPVMFDLPSREDVASVVITEDVVLRGAEPTMIPHVTKRRKSA</sequence>
<accession>B8HA33</accession>